<accession>Q6PID6</accession>
<accession>B2R6G0</accession>
<accession>O95105</accession>
<proteinExistence type="evidence at protein level"/>
<gene>
    <name type="primary">TTC33</name>
</gene>
<organism>
    <name type="scientific">Homo sapiens</name>
    <name type="common">Human</name>
    <dbReference type="NCBI Taxonomy" id="9606"/>
    <lineage>
        <taxon>Eukaryota</taxon>
        <taxon>Metazoa</taxon>
        <taxon>Chordata</taxon>
        <taxon>Craniata</taxon>
        <taxon>Vertebrata</taxon>
        <taxon>Euteleostomi</taxon>
        <taxon>Mammalia</taxon>
        <taxon>Eutheria</taxon>
        <taxon>Euarchontoglires</taxon>
        <taxon>Primates</taxon>
        <taxon>Haplorrhini</taxon>
        <taxon>Catarrhini</taxon>
        <taxon>Hominidae</taxon>
        <taxon>Homo</taxon>
    </lineage>
</organism>
<feature type="chain" id="PRO_0000287515" description="Tetratricopeptide repeat protein 33">
    <location>
        <begin position="1"/>
        <end position="262"/>
    </location>
</feature>
<feature type="repeat" description="TPR 1">
    <location>
        <begin position="59"/>
        <end position="92"/>
    </location>
</feature>
<feature type="repeat" description="TPR 2">
    <location>
        <begin position="93"/>
        <end position="126"/>
    </location>
</feature>
<feature type="repeat" description="TPR 3">
    <location>
        <begin position="127"/>
        <end position="160"/>
    </location>
</feature>
<feature type="modified residue" description="Phosphoserine" evidence="2 3 4 5 6 7">
    <location>
        <position position="197"/>
    </location>
</feature>
<feature type="modified residue" description="Phosphothreonine" evidence="6">
    <location>
        <position position="251"/>
    </location>
</feature>
<feature type="sequence variant" id="VAR_032317" description="In dbSNP:rs837105.">
    <original>L</original>
    <variation>M</variation>
    <location>
        <position position="69"/>
    </location>
</feature>
<feature type="sequence conflict" description="In Ref. 4; AAH36536." evidence="1" ref="4">
    <original>K</original>
    <variation>R</variation>
    <location>
        <position position="13"/>
    </location>
</feature>
<keyword id="KW-0597">Phosphoprotein</keyword>
<keyword id="KW-1267">Proteomics identification</keyword>
<keyword id="KW-1185">Reference proteome</keyword>
<keyword id="KW-0677">Repeat</keyword>
<keyword id="KW-0802">TPR repeat</keyword>
<sequence length="262" mass="29411">MASFGWKRKIGEKVSKVTSQQFEAEAADEKDVVDNDEGNWLHAIKRRKEILLEGCAEKSKQLKDEGASLAENKRYREAIQKWDEALQLTPNDATLYEMKSQVLMSLHEMFPAVHAAEMAVQQNPHSWESWQTLGRAQLGLGEIILAIRSFQVALHIYPMNPEIWKEDLSWARTLQEQQKVAQRIKKSEAPAEVTHFSPKSIPDYDFESDEIVAVCAAIAEKEKTVSANKTMVIVSASGAIETVTEKEDGATPPDGSVFIKAR</sequence>
<name>TTC33_HUMAN</name>
<reference key="1">
    <citation type="submission" date="1997-09" db="EMBL/GenBank/DDBJ databases">
        <authorList>
            <person name="Giot J.F."/>
        </authorList>
    </citation>
    <scope>NUCLEOTIDE SEQUENCE [MRNA]</scope>
    <source>
        <tissue>Skeletal muscle</tissue>
    </source>
</reference>
<reference key="2">
    <citation type="journal article" date="2004" name="Nat. Genet.">
        <title>Complete sequencing and characterization of 21,243 full-length human cDNAs.</title>
        <authorList>
            <person name="Ota T."/>
            <person name="Suzuki Y."/>
            <person name="Nishikawa T."/>
            <person name="Otsuki T."/>
            <person name="Sugiyama T."/>
            <person name="Irie R."/>
            <person name="Wakamatsu A."/>
            <person name="Hayashi K."/>
            <person name="Sato H."/>
            <person name="Nagai K."/>
            <person name="Kimura K."/>
            <person name="Makita H."/>
            <person name="Sekine M."/>
            <person name="Obayashi M."/>
            <person name="Nishi T."/>
            <person name="Shibahara T."/>
            <person name="Tanaka T."/>
            <person name="Ishii S."/>
            <person name="Yamamoto J."/>
            <person name="Saito K."/>
            <person name="Kawai Y."/>
            <person name="Isono Y."/>
            <person name="Nakamura Y."/>
            <person name="Nagahari K."/>
            <person name="Murakami K."/>
            <person name="Yasuda T."/>
            <person name="Iwayanagi T."/>
            <person name="Wagatsuma M."/>
            <person name="Shiratori A."/>
            <person name="Sudo H."/>
            <person name="Hosoiri T."/>
            <person name="Kaku Y."/>
            <person name="Kodaira H."/>
            <person name="Kondo H."/>
            <person name="Sugawara M."/>
            <person name="Takahashi M."/>
            <person name="Kanda K."/>
            <person name="Yokoi T."/>
            <person name="Furuya T."/>
            <person name="Kikkawa E."/>
            <person name="Omura Y."/>
            <person name="Abe K."/>
            <person name="Kamihara K."/>
            <person name="Katsuta N."/>
            <person name="Sato K."/>
            <person name="Tanikawa M."/>
            <person name="Yamazaki M."/>
            <person name="Ninomiya K."/>
            <person name="Ishibashi T."/>
            <person name="Yamashita H."/>
            <person name="Murakawa K."/>
            <person name="Fujimori K."/>
            <person name="Tanai H."/>
            <person name="Kimata M."/>
            <person name="Watanabe M."/>
            <person name="Hiraoka S."/>
            <person name="Chiba Y."/>
            <person name="Ishida S."/>
            <person name="Ono Y."/>
            <person name="Takiguchi S."/>
            <person name="Watanabe S."/>
            <person name="Yosida M."/>
            <person name="Hotuta T."/>
            <person name="Kusano J."/>
            <person name="Kanehori K."/>
            <person name="Takahashi-Fujii A."/>
            <person name="Hara H."/>
            <person name="Tanase T.-O."/>
            <person name="Nomura Y."/>
            <person name="Togiya S."/>
            <person name="Komai F."/>
            <person name="Hara R."/>
            <person name="Takeuchi K."/>
            <person name="Arita M."/>
            <person name="Imose N."/>
            <person name="Musashino K."/>
            <person name="Yuuki H."/>
            <person name="Oshima A."/>
            <person name="Sasaki N."/>
            <person name="Aotsuka S."/>
            <person name="Yoshikawa Y."/>
            <person name="Matsunawa H."/>
            <person name="Ichihara T."/>
            <person name="Shiohata N."/>
            <person name="Sano S."/>
            <person name="Moriya S."/>
            <person name="Momiyama H."/>
            <person name="Satoh N."/>
            <person name="Takami S."/>
            <person name="Terashima Y."/>
            <person name="Suzuki O."/>
            <person name="Nakagawa S."/>
            <person name="Senoh A."/>
            <person name="Mizoguchi H."/>
            <person name="Goto Y."/>
            <person name="Shimizu F."/>
            <person name="Wakebe H."/>
            <person name="Hishigaki H."/>
            <person name="Watanabe T."/>
            <person name="Sugiyama A."/>
            <person name="Takemoto M."/>
            <person name="Kawakami B."/>
            <person name="Yamazaki M."/>
            <person name="Watanabe K."/>
            <person name="Kumagai A."/>
            <person name="Itakura S."/>
            <person name="Fukuzumi Y."/>
            <person name="Fujimori Y."/>
            <person name="Komiyama M."/>
            <person name="Tashiro H."/>
            <person name="Tanigami A."/>
            <person name="Fujiwara T."/>
            <person name="Ono T."/>
            <person name="Yamada K."/>
            <person name="Fujii Y."/>
            <person name="Ozaki K."/>
            <person name="Hirao M."/>
            <person name="Ohmori Y."/>
            <person name="Kawabata A."/>
            <person name="Hikiji T."/>
            <person name="Kobatake N."/>
            <person name="Inagaki H."/>
            <person name="Ikema Y."/>
            <person name="Okamoto S."/>
            <person name="Okitani R."/>
            <person name="Kawakami T."/>
            <person name="Noguchi S."/>
            <person name="Itoh T."/>
            <person name="Shigeta K."/>
            <person name="Senba T."/>
            <person name="Matsumura K."/>
            <person name="Nakajima Y."/>
            <person name="Mizuno T."/>
            <person name="Morinaga M."/>
            <person name="Sasaki M."/>
            <person name="Togashi T."/>
            <person name="Oyama M."/>
            <person name="Hata H."/>
            <person name="Watanabe M."/>
            <person name="Komatsu T."/>
            <person name="Mizushima-Sugano J."/>
            <person name="Satoh T."/>
            <person name="Shirai Y."/>
            <person name="Takahashi Y."/>
            <person name="Nakagawa K."/>
            <person name="Okumura K."/>
            <person name="Nagase T."/>
            <person name="Nomura N."/>
            <person name="Kikuchi H."/>
            <person name="Masuho Y."/>
            <person name="Yamashita R."/>
            <person name="Nakai K."/>
            <person name="Yada T."/>
            <person name="Nakamura Y."/>
            <person name="Ohara O."/>
            <person name="Isogai T."/>
            <person name="Sugano S."/>
        </authorList>
    </citation>
    <scope>NUCLEOTIDE SEQUENCE [LARGE SCALE MRNA]</scope>
    <source>
        <tissue>Brain</tissue>
    </source>
</reference>
<reference key="3">
    <citation type="submission" date="2005-07" db="EMBL/GenBank/DDBJ databases">
        <authorList>
            <person name="Mural R.J."/>
            <person name="Istrail S."/>
            <person name="Sutton G.G."/>
            <person name="Florea L."/>
            <person name="Halpern A.L."/>
            <person name="Mobarry C.M."/>
            <person name="Lippert R."/>
            <person name="Walenz B."/>
            <person name="Shatkay H."/>
            <person name="Dew I."/>
            <person name="Miller J.R."/>
            <person name="Flanigan M.J."/>
            <person name="Edwards N.J."/>
            <person name="Bolanos R."/>
            <person name="Fasulo D."/>
            <person name="Halldorsson B.V."/>
            <person name="Hannenhalli S."/>
            <person name="Turner R."/>
            <person name="Yooseph S."/>
            <person name="Lu F."/>
            <person name="Nusskern D.R."/>
            <person name="Shue B.C."/>
            <person name="Zheng X.H."/>
            <person name="Zhong F."/>
            <person name="Delcher A.L."/>
            <person name="Huson D.H."/>
            <person name="Kravitz S.A."/>
            <person name="Mouchard L."/>
            <person name="Reinert K."/>
            <person name="Remington K.A."/>
            <person name="Clark A.G."/>
            <person name="Waterman M.S."/>
            <person name="Eichler E.E."/>
            <person name="Adams M.D."/>
            <person name="Hunkapiller M.W."/>
            <person name="Myers E.W."/>
            <person name="Venter J.C."/>
        </authorList>
    </citation>
    <scope>NUCLEOTIDE SEQUENCE [LARGE SCALE GENOMIC DNA]</scope>
</reference>
<reference key="4">
    <citation type="journal article" date="2004" name="Genome Res.">
        <title>The status, quality, and expansion of the NIH full-length cDNA project: the Mammalian Gene Collection (MGC).</title>
        <authorList>
            <consortium name="The MGC Project Team"/>
        </authorList>
    </citation>
    <scope>NUCLEOTIDE SEQUENCE [LARGE SCALE MRNA]</scope>
    <source>
        <tissue>Uterus</tissue>
    </source>
</reference>
<reference key="5">
    <citation type="journal article" date="2008" name="Proc. Natl. Acad. Sci. U.S.A.">
        <title>A quantitative atlas of mitotic phosphorylation.</title>
        <authorList>
            <person name="Dephoure N."/>
            <person name="Zhou C."/>
            <person name="Villen J."/>
            <person name="Beausoleil S.A."/>
            <person name="Bakalarski C.E."/>
            <person name="Elledge S.J."/>
            <person name="Gygi S.P."/>
        </authorList>
    </citation>
    <scope>PHOSPHORYLATION [LARGE SCALE ANALYSIS] AT SER-197</scope>
    <scope>IDENTIFICATION BY MASS SPECTROMETRY [LARGE SCALE ANALYSIS]</scope>
    <source>
        <tissue>Cervix carcinoma</tissue>
    </source>
</reference>
<reference key="6">
    <citation type="journal article" date="2009" name="Anal. Chem.">
        <title>Lys-N and trypsin cover complementary parts of the phosphoproteome in a refined SCX-based approach.</title>
        <authorList>
            <person name="Gauci S."/>
            <person name="Helbig A.O."/>
            <person name="Slijper M."/>
            <person name="Krijgsveld J."/>
            <person name="Heck A.J."/>
            <person name="Mohammed S."/>
        </authorList>
    </citation>
    <scope>IDENTIFICATION BY MASS SPECTROMETRY [LARGE SCALE ANALYSIS]</scope>
</reference>
<reference key="7">
    <citation type="journal article" date="2009" name="Sci. Signal.">
        <title>Quantitative phosphoproteomic analysis of T cell receptor signaling reveals system-wide modulation of protein-protein interactions.</title>
        <authorList>
            <person name="Mayya V."/>
            <person name="Lundgren D.H."/>
            <person name="Hwang S.-I."/>
            <person name="Rezaul K."/>
            <person name="Wu L."/>
            <person name="Eng J.K."/>
            <person name="Rodionov V."/>
            <person name="Han D.K."/>
        </authorList>
    </citation>
    <scope>PHOSPHORYLATION [LARGE SCALE ANALYSIS] AT SER-197</scope>
    <scope>IDENTIFICATION BY MASS SPECTROMETRY [LARGE SCALE ANALYSIS]</scope>
    <source>
        <tissue>Leukemic T-cell</tissue>
    </source>
</reference>
<reference key="8">
    <citation type="journal article" date="2010" name="Sci. Signal.">
        <title>Quantitative phosphoproteomics reveals widespread full phosphorylation site occupancy during mitosis.</title>
        <authorList>
            <person name="Olsen J.V."/>
            <person name="Vermeulen M."/>
            <person name="Santamaria A."/>
            <person name="Kumar C."/>
            <person name="Miller M.L."/>
            <person name="Jensen L.J."/>
            <person name="Gnad F."/>
            <person name="Cox J."/>
            <person name="Jensen T.S."/>
            <person name="Nigg E.A."/>
            <person name="Brunak S."/>
            <person name="Mann M."/>
        </authorList>
    </citation>
    <scope>PHOSPHORYLATION [LARGE SCALE ANALYSIS] AT SER-197</scope>
    <scope>IDENTIFICATION BY MASS SPECTROMETRY [LARGE SCALE ANALYSIS]</scope>
    <source>
        <tissue>Cervix carcinoma</tissue>
    </source>
</reference>
<reference key="9">
    <citation type="journal article" date="2011" name="Sci. Signal.">
        <title>System-wide temporal characterization of the proteome and phosphoproteome of human embryonic stem cell differentiation.</title>
        <authorList>
            <person name="Rigbolt K.T."/>
            <person name="Prokhorova T.A."/>
            <person name="Akimov V."/>
            <person name="Henningsen J."/>
            <person name="Johansen P.T."/>
            <person name="Kratchmarova I."/>
            <person name="Kassem M."/>
            <person name="Mann M."/>
            <person name="Olsen J.V."/>
            <person name="Blagoev B."/>
        </authorList>
    </citation>
    <scope>PHOSPHORYLATION [LARGE SCALE ANALYSIS] AT SER-197</scope>
    <scope>IDENTIFICATION BY MASS SPECTROMETRY [LARGE SCALE ANALYSIS]</scope>
</reference>
<reference key="10">
    <citation type="journal article" date="2013" name="J. Proteome Res.">
        <title>Toward a comprehensive characterization of a human cancer cell phosphoproteome.</title>
        <authorList>
            <person name="Zhou H."/>
            <person name="Di Palma S."/>
            <person name="Preisinger C."/>
            <person name="Peng M."/>
            <person name="Polat A.N."/>
            <person name="Heck A.J."/>
            <person name="Mohammed S."/>
        </authorList>
    </citation>
    <scope>PHOSPHORYLATION [LARGE SCALE ANALYSIS] AT SER-197 AND THR-251</scope>
    <scope>IDENTIFICATION BY MASS SPECTROMETRY [LARGE SCALE ANALYSIS]</scope>
    <source>
        <tissue>Cervix carcinoma</tissue>
        <tissue>Erythroleukemia</tissue>
    </source>
</reference>
<reference key="11">
    <citation type="journal article" date="2014" name="J. Proteomics">
        <title>An enzyme assisted RP-RPLC approach for in-depth analysis of human liver phosphoproteome.</title>
        <authorList>
            <person name="Bian Y."/>
            <person name="Song C."/>
            <person name="Cheng K."/>
            <person name="Dong M."/>
            <person name="Wang F."/>
            <person name="Huang J."/>
            <person name="Sun D."/>
            <person name="Wang L."/>
            <person name="Ye M."/>
            <person name="Zou H."/>
        </authorList>
    </citation>
    <scope>PHOSPHORYLATION [LARGE SCALE ANALYSIS] AT SER-197</scope>
    <scope>IDENTIFICATION BY MASS SPECTROMETRY [LARGE SCALE ANALYSIS]</scope>
    <source>
        <tissue>Liver</tissue>
    </source>
</reference>
<dbReference type="EMBL" id="AF023244">
    <property type="protein sequence ID" value="AAD09341.1"/>
    <property type="molecule type" value="mRNA"/>
</dbReference>
<dbReference type="EMBL" id="AK312560">
    <property type="protein sequence ID" value="BAG35457.1"/>
    <property type="molecule type" value="mRNA"/>
</dbReference>
<dbReference type="EMBL" id="CH471119">
    <property type="protein sequence ID" value="EAW55998.1"/>
    <property type="molecule type" value="Genomic_DNA"/>
</dbReference>
<dbReference type="EMBL" id="BC015701">
    <property type="protein sequence ID" value="AAH15701.1"/>
    <property type="molecule type" value="mRNA"/>
</dbReference>
<dbReference type="EMBL" id="BC036536">
    <property type="protein sequence ID" value="AAH36536.1"/>
    <property type="molecule type" value="mRNA"/>
</dbReference>
<dbReference type="CCDS" id="CCDS3931.1"/>
<dbReference type="RefSeq" id="NP_036514.1">
    <property type="nucleotide sequence ID" value="NM_012382.3"/>
</dbReference>
<dbReference type="RefSeq" id="XP_011512305.1">
    <property type="nucleotide sequence ID" value="XM_011514003.4"/>
</dbReference>
<dbReference type="RefSeq" id="XP_054208230.1">
    <property type="nucleotide sequence ID" value="XM_054352255.1"/>
</dbReference>
<dbReference type="SMR" id="Q6PID6"/>
<dbReference type="BioGRID" id="117092">
    <property type="interactions" value="57"/>
</dbReference>
<dbReference type="FunCoup" id="Q6PID6">
    <property type="interactions" value="1556"/>
</dbReference>
<dbReference type="IntAct" id="Q6PID6">
    <property type="interactions" value="46"/>
</dbReference>
<dbReference type="MINT" id="Q6PID6"/>
<dbReference type="STRING" id="9606.ENSP00000338533"/>
<dbReference type="GlyGen" id="Q6PID6">
    <property type="glycosylation" value="1 site, 1 O-linked glycan (1 site)"/>
</dbReference>
<dbReference type="iPTMnet" id="Q6PID6"/>
<dbReference type="PhosphoSitePlus" id="Q6PID6"/>
<dbReference type="BioMuta" id="TTC33"/>
<dbReference type="DMDM" id="147737109"/>
<dbReference type="jPOST" id="Q6PID6"/>
<dbReference type="MassIVE" id="Q6PID6"/>
<dbReference type="PaxDb" id="9606-ENSP00000338533"/>
<dbReference type="PeptideAtlas" id="Q6PID6"/>
<dbReference type="ProteomicsDB" id="67149"/>
<dbReference type="Pumba" id="Q6PID6"/>
<dbReference type="Antibodypedia" id="23145">
    <property type="antibodies" value="178 antibodies from 23 providers"/>
</dbReference>
<dbReference type="DNASU" id="23548"/>
<dbReference type="Ensembl" id="ENST00000337702.5">
    <property type="protein sequence ID" value="ENSP00000338533.4"/>
    <property type="gene ID" value="ENSG00000113638.14"/>
</dbReference>
<dbReference type="GeneID" id="23548"/>
<dbReference type="KEGG" id="hsa:23548"/>
<dbReference type="MANE-Select" id="ENST00000337702.5">
    <property type="protein sequence ID" value="ENSP00000338533.4"/>
    <property type="RefSeq nucleotide sequence ID" value="NM_012382.3"/>
    <property type="RefSeq protein sequence ID" value="NP_036514.1"/>
</dbReference>
<dbReference type="UCSC" id="uc003jma.4">
    <property type="organism name" value="human"/>
</dbReference>
<dbReference type="AGR" id="HGNC:29959"/>
<dbReference type="CTD" id="23548"/>
<dbReference type="DisGeNET" id="23548"/>
<dbReference type="GeneCards" id="TTC33"/>
<dbReference type="HGNC" id="HGNC:29959">
    <property type="gene designation" value="TTC33"/>
</dbReference>
<dbReference type="HPA" id="ENSG00000113638">
    <property type="expression patterns" value="Low tissue specificity"/>
</dbReference>
<dbReference type="neXtProt" id="NX_Q6PID6"/>
<dbReference type="OpenTargets" id="ENSG00000113638"/>
<dbReference type="PharmGKB" id="PA162407196"/>
<dbReference type="VEuPathDB" id="HostDB:ENSG00000113638"/>
<dbReference type="eggNOG" id="KOG0553">
    <property type="taxonomic scope" value="Eukaryota"/>
</dbReference>
<dbReference type="GeneTree" id="ENSGT00390000017462"/>
<dbReference type="HOGENOM" id="CLU_1061581_0_0_1"/>
<dbReference type="InParanoid" id="Q6PID6"/>
<dbReference type="OMA" id="WQEDLKW"/>
<dbReference type="OrthoDB" id="2423701at2759"/>
<dbReference type="PAN-GO" id="Q6PID6">
    <property type="GO annotations" value="0 GO annotations based on evolutionary models"/>
</dbReference>
<dbReference type="PhylomeDB" id="Q6PID6"/>
<dbReference type="TreeFam" id="TF332142"/>
<dbReference type="PathwayCommons" id="Q6PID6"/>
<dbReference type="SignaLink" id="Q6PID6"/>
<dbReference type="BioGRID-ORCS" id="23548">
    <property type="hits" value="10 hits in 1152 CRISPR screens"/>
</dbReference>
<dbReference type="ChiTaRS" id="TTC33">
    <property type="organism name" value="human"/>
</dbReference>
<dbReference type="GenomeRNAi" id="23548"/>
<dbReference type="Pharos" id="Q6PID6">
    <property type="development level" value="Tbio"/>
</dbReference>
<dbReference type="PRO" id="PR:Q6PID6"/>
<dbReference type="Proteomes" id="UP000005640">
    <property type="component" value="Chromosome 5"/>
</dbReference>
<dbReference type="RNAct" id="Q6PID6">
    <property type="molecule type" value="protein"/>
</dbReference>
<dbReference type="Bgee" id="ENSG00000113638">
    <property type="expression patterns" value="Expressed in calcaneal tendon and 191 other cell types or tissues"/>
</dbReference>
<dbReference type="ExpressionAtlas" id="Q6PID6">
    <property type="expression patterns" value="baseline and differential"/>
</dbReference>
<dbReference type="Gene3D" id="1.25.40.10">
    <property type="entry name" value="Tetratricopeptide repeat domain"/>
    <property type="match status" value="1"/>
</dbReference>
<dbReference type="InterPro" id="IPR052658">
    <property type="entry name" value="TPR-containing"/>
</dbReference>
<dbReference type="InterPro" id="IPR011990">
    <property type="entry name" value="TPR-like_helical_dom_sf"/>
</dbReference>
<dbReference type="InterPro" id="IPR019734">
    <property type="entry name" value="TPR_rpt"/>
</dbReference>
<dbReference type="PANTHER" id="PTHR15544">
    <property type="entry name" value="OSMOSIS RESPONSIVE FACTOR"/>
    <property type="match status" value="1"/>
</dbReference>
<dbReference type="PANTHER" id="PTHR15544:SF0">
    <property type="entry name" value="TETRATRICOPEPTIDE REPEAT PROTEIN 33"/>
    <property type="match status" value="1"/>
</dbReference>
<dbReference type="SMART" id="SM00028">
    <property type="entry name" value="TPR"/>
    <property type="match status" value="2"/>
</dbReference>
<dbReference type="SUPFAM" id="SSF48452">
    <property type="entry name" value="TPR-like"/>
    <property type="match status" value="1"/>
</dbReference>
<dbReference type="PROSITE" id="PS50005">
    <property type="entry name" value="TPR"/>
    <property type="match status" value="3"/>
</dbReference>
<dbReference type="PROSITE" id="PS50293">
    <property type="entry name" value="TPR_REGION"/>
    <property type="match status" value="1"/>
</dbReference>
<comment type="interaction">
    <interactant intactId="EBI-2555404">
        <id>Q6PID6</id>
    </interactant>
    <interactant intactId="EBI-1222467">
        <id>P02649</id>
        <label>APOE</label>
    </interactant>
    <organismsDiffer>false</organismsDiffer>
    <experiments>3</experiments>
</comment>
<comment type="interaction">
    <interactant intactId="EBI-2555404">
        <id>Q6PID6</id>
    </interactant>
    <interactant intactId="EBI-21553822">
        <id>Q96A83-2</id>
        <label>COL26A1</label>
    </interactant>
    <organismsDiffer>false</organismsDiffer>
    <experiments>3</experiments>
</comment>
<comment type="interaction">
    <interactant intactId="EBI-2555404">
        <id>Q6PID6</id>
    </interactant>
    <interactant intactId="EBI-12593112">
        <id>O75190-2</id>
        <label>DNAJB6</label>
    </interactant>
    <organismsDiffer>false</organismsDiffer>
    <experiments>3</experiments>
</comment>
<comment type="interaction">
    <interactant intactId="EBI-2555404">
        <id>Q6PID6</id>
    </interactant>
    <interactant intactId="EBI-395638">
        <id>O14645</id>
        <label>DNALI1</label>
    </interactant>
    <organismsDiffer>false</organismsDiffer>
    <experiments>3</experiments>
</comment>
<comment type="interaction">
    <interactant intactId="EBI-2555404">
        <id>Q6PID6</id>
    </interactant>
    <interactant intactId="EBI-21603100">
        <id>P26378-2</id>
        <label>ELAVL4</label>
    </interactant>
    <organismsDiffer>false</organismsDiffer>
    <experiments>3</experiments>
</comment>
<comment type="interaction">
    <interactant intactId="EBI-2555404">
        <id>Q6PID6</id>
    </interactant>
    <interactant intactId="EBI-948266">
        <id>O14901</id>
        <label>KLF11</label>
    </interactant>
    <organismsDiffer>false</organismsDiffer>
    <experiments>3</experiments>
</comment>
<comment type="interaction">
    <interactant intactId="EBI-2555404">
        <id>Q6PID6</id>
    </interactant>
    <interactant intactId="EBI-2691489">
        <id>Q8WV92</id>
        <label>MITD1</label>
    </interactant>
    <organismsDiffer>false</organismsDiffer>
    <experiments>3</experiments>
</comment>
<comment type="interaction">
    <interactant intactId="EBI-2555404">
        <id>Q6PID6</id>
    </interactant>
    <interactant intactId="EBI-716486">
        <id>Q92597</id>
        <label>NDRG1</label>
    </interactant>
    <organismsDiffer>false</organismsDiffer>
    <experiments>3</experiments>
</comment>
<comment type="interaction">
    <interactant intactId="EBI-2555404">
        <id>Q6PID6</id>
    </interactant>
    <interactant intactId="EBI-2811583">
        <id>Q9BVL2</id>
        <label>NUP58</label>
    </interactant>
    <organismsDiffer>false</organismsDiffer>
    <experiments>3</experiments>
</comment>
<comment type="interaction">
    <interactant intactId="EBI-2555404">
        <id>Q6PID6</id>
    </interactant>
    <interactant intactId="EBI-372273">
        <id>P20618</id>
        <label>PSMB1</label>
    </interactant>
    <organismsDiffer>false</organismsDiffer>
    <experiments>3</experiments>
</comment>
<comment type="interaction">
    <interactant intactId="EBI-2555404">
        <id>Q6PID6</id>
    </interactant>
    <interactant intactId="EBI-749995">
        <id>P56279</id>
        <label>TCL1A</label>
    </interactant>
    <organismsDiffer>false</organismsDiffer>
    <experiments>7</experiments>
</comment>
<comment type="interaction">
    <interactant intactId="EBI-2555404">
        <id>Q6PID6</id>
    </interactant>
    <interactant intactId="EBI-359793">
        <id>P40222</id>
        <label>TXLNA</label>
    </interactant>
    <organismsDiffer>false</organismsDiffer>
    <experiments>6</experiments>
</comment>
<evidence type="ECO:0000305" key="1"/>
<evidence type="ECO:0007744" key="2">
    <source>
    </source>
</evidence>
<evidence type="ECO:0007744" key="3">
    <source>
    </source>
</evidence>
<evidence type="ECO:0007744" key="4">
    <source>
    </source>
</evidence>
<evidence type="ECO:0007744" key="5">
    <source>
    </source>
</evidence>
<evidence type="ECO:0007744" key="6">
    <source>
    </source>
</evidence>
<evidence type="ECO:0007744" key="7">
    <source>
    </source>
</evidence>
<protein>
    <recommendedName>
        <fullName>Tetratricopeptide repeat protein 33</fullName>
        <shortName>TPR repeat protein 33</shortName>
    </recommendedName>
    <alternativeName>
        <fullName>Osmosis-responsive factor</fullName>
    </alternativeName>
</protein>